<protein>
    <recommendedName>
        <fullName>Membrane transporter D2</fullName>
    </recommendedName>
</protein>
<accession>Q01441</accession>
<comment type="subcellular location">
    <subcellularLocation>
        <location>Membrane</location>
        <topology>Multi-pass membrane protein</topology>
    </subcellularLocation>
</comment>
<comment type="developmental stage">
    <text>Predominantly found in promastigotes.</text>
</comment>
<comment type="similarity">
    <text evidence="3">Belongs to the major facilitator superfamily. Sugar transporter (TC 2.A.1.1) family.</text>
</comment>
<organism>
    <name type="scientific">Leishmania donovani</name>
    <dbReference type="NCBI Taxonomy" id="5661"/>
    <lineage>
        <taxon>Eukaryota</taxon>
        <taxon>Discoba</taxon>
        <taxon>Euglenozoa</taxon>
        <taxon>Kinetoplastea</taxon>
        <taxon>Metakinetoplastina</taxon>
        <taxon>Trypanosomatida</taxon>
        <taxon>Trypanosomatidae</taxon>
        <taxon>Leishmaniinae</taxon>
        <taxon>Leishmania</taxon>
    </lineage>
</organism>
<feature type="chain" id="PRO_0000050452" description="Membrane transporter D2">
    <location>
        <begin position="1"/>
        <end position="558"/>
    </location>
</feature>
<feature type="topological domain" description="Cytoplasmic" evidence="1">
    <location>
        <begin position="1"/>
        <end position="38"/>
    </location>
</feature>
<feature type="transmembrane region" description="Helical; Name=1" evidence="1">
    <location>
        <begin position="39"/>
        <end position="59"/>
    </location>
</feature>
<feature type="topological domain" description="Extracellular" evidence="1">
    <location>
        <begin position="60"/>
        <end position="152"/>
    </location>
</feature>
<feature type="transmembrane region" description="Helical; Name=2" evidence="1">
    <location>
        <begin position="153"/>
        <end position="173"/>
    </location>
</feature>
<feature type="topological domain" description="Cytoplasmic" evidence="1">
    <location>
        <begin position="174"/>
        <end position="179"/>
    </location>
</feature>
<feature type="transmembrane region" description="Helical; Name=3" evidence="1">
    <location>
        <begin position="180"/>
        <end position="200"/>
    </location>
</feature>
<feature type="topological domain" description="Extracellular" evidence="1">
    <location>
        <begin position="201"/>
        <end position="204"/>
    </location>
</feature>
<feature type="transmembrane region" description="Helical; Name=4" evidence="1">
    <location>
        <begin position="205"/>
        <end position="225"/>
    </location>
</feature>
<feature type="topological domain" description="Cytoplasmic" evidence="1">
    <location>
        <begin position="226"/>
        <end position="241"/>
    </location>
</feature>
<feature type="transmembrane region" description="Helical; Name=5" evidence="1">
    <location>
        <begin position="242"/>
        <end position="262"/>
    </location>
</feature>
<feature type="topological domain" description="Extracellular" evidence="1">
    <location>
        <begin position="263"/>
        <end position="281"/>
    </location>
</feature>
<feature type="transmembrane region" description="Helical; Name=6" evidence="1">
    <location>
        <begin position="282"/>
        <end position="302"/>
    </location>
</feature>
<feature type="topological domain" description="Cytoplasmic" evidence="1">
    <location>
        <begin position="303"/>
        <end position="335"/>
    </location>
</feature>
<feature type="transmembrane region" description="Helical; Name=7" evidence="1">
    <location>
        <begin position="336"/>
        <end position="356"/>
    </location>
</feature>
<feature type="topological domain" description="Extracellular" evidence="1">
    <location>
        <begin position="357"/>
        <end position="373"/>
    </location>
</feature>
<feature type="transmembrane region" description="Helical; Name=8" evidence="1">
    <location>
        <begin position="374"/>
        <end position="394"/>
    </location>
</feature>
<feature type="topological domain" description="Cytoplasmic" evidence="1">
    <location>
        <begin position="395"/>
        <end position="402"/>
    </location>
</feature>
<feature type="transmembrane region" description="Helical; Name=9" evidence="1">
    <location>
        <begin position="403"/>
        <end position="423"/>
    </location>
</feature>
<feature type="topological domain" description="Extracellular" evidence="1">
    <location>
        <begin position="424"/>
        <end position="441"/>
    </location>
</feature>
<feature type="transmembrane region" description="Helical; Name=10" evidence="1">
    <location>
        <begin position="442"/>
        <end position="463"/>
    </location>
</feature>
<feature type="topological domain" description="Cytoplasmic" evidence="1">
    <location>
        <begin position="464"/>
        <end position="478"/>
    </location>
</feature>
<feature type="transmembrane region" description="Helical; Name=11" evidence="1">
    <location>
        <begin position="479"/>
        <end position="499"/>
    </location>
</feature>
<feature type="topological domain" description="Extracellular" evidence="1">
    <location>
        <begin position="500"/>
        <end position="512"/>
    </location>
</feature>
<feature type="transmembrane region" description="Helical; Name=12" evidence="1">
    <location>
        <begin position="513"/>
        <end position="533"/>
    </location>
</feature>
<feature type="topological domain" description="Cytoplasmic" evidence="1">
    <location>
        <begin position="534"/>
        <end position="558"/>
    </location>
</feature>
<feature type="region of interest" description="Disordered" evidence="2">
    <location>
        <begin position="1"/>
        <end position="28"/>
    </location>
</feature>
<proteinExistence type="evidence at transcript level"/>
<keyword id="KW-0472">Membrane</keyword>
<keyword id="KW-0762">Sugar transport</keyword>
<keyword id="KW-0812">Transmembrane</keyword>
<keyword id="KW-1133">Transmembrane helix</keyword>
<keyword id="KW-0813">Transport</keyword>
<name>GTR2_LEIDO</name>
<reference key="1">
    <citation type="journal article" date="1992" name="Mol. Biochem. Parasitol.">
        <title>Molecular characterization of two genes encoding members of the glucose transporter superfamily in the parasitic protozoan Leishmania donovani.</title>
        <authorList>
            <person name="Langford C.K."/>
            <person name="Ewbank S.A."/>
            <person name="Hanson S.S."/>
            <person name="Ullman B."/>
            <person name="Landfear S.M."/>
        </authorList>
    </citation>
    <scope>NUCLEOTIDE SEQUENCE [GENOMIC DNA]</scope>
</reference>
<dbReference type="EMBL" id="M85073">
    <property type="protein sequence ID" value="AAA29231.1"/>
    <property type="molecule type" value="Genomic_DNA"/>
</dbReference>
<dbReference type="SMR" id="Q01441"/>
<dbReference type="TCDB" id="2.A.1.1.16">
    <property type="family name" value="the major facilitator superfamily (mfs)"/>
</dbReference>
<dbReference type="VEuPathDB" id="TriTrypDB:LdBPK_330310.1"/>
<dbReference type="VEuPathDB" id="TriTrypDB:LdCL_330008000"/>
<dbReference type="VEuPathDB" id="TriTrypDB:LDHU3_33.0380"/>
<dbReference type="GO" id="GO:0016020">
    <property type="term" value="C:membrane"/>
    <property type="evidence" value="ECO:0007669"/>
    <property type="project" value="UniProtKB-SubCell"/>
</dbReference>
<dbReference type="GO" id="GO:0015149">
    <property type="term" value="F:hexose transmembrane transporter activity"/>
    <property type="evidence" value="ECO:0007669"/>
    <property type="project" value="TreeGrafter"/>
</dbReference>
<dbReference type="CDD" id="cd17315">
    <property type="entry name" value="MFS_GLUT_like"/>
    <property type="match status" value="1"/>
</dbReference>
<dbReference type="Gene3D" id="1.20.1250.20">
    <property type="entry name" value="MFS general substrate transporter like domains"/>
    <property type="match status" value="2"/>
</dbReference>
<dbReference type="InterPro" id="IPR045263">
    <property type="entry name" value="GLUT"/>
</dbReference>
<dbReference type="InterPro" id="IPR020846">
    <property type="entry name" value="MFS_dom"/>
</dbReference>
<dbReference type="InterPro" id="IPR005828">
    <property type="entry name" value="MFS_sugar_transport-like"/>
</dbReference>
<dbReference type="InterPro" id="IPR036259">
    <property type="entry name" value="MFS_trans_sf"/>
</dbReference>
<dbReference type="InterPro" id="IPR003663">
    <property type="entry name" value="Sugar/inositol_transpt"/>
</dbReference>
<dbReference type="NCBIfam" id="TIGR00879">
    <property type="entry name" value="SP"/>
    <property type="match status" value="1"/>
</dbReference>
<dbReference type="PANTHER" id="PTHR23503:SF8">
    <property type="entry name" value="FACILITATED GLUCOSE TRANSPORTER PROTEIN 1"/>
    <property type="match status" value="1"/>
</dbReference>
<dbReference type="PANTHER" id="PTHR23503">
    <property type="entry name" value="SOLUTE CARRIER FAMILY 2"/>
    <property type="match status" value="1"/>
</dbReference>
<dbReference type="Pfam" id="PF00083">
    <property type="entry name" value="Sugar_tr"/>
    <property type="match status" value="1"/>
</dbReference>
<dbReference type="PRINTS" id="PR00171">
    <property type="entry name" value="SUGRTRNSPORT"/>
</dbReference>
<dbReference type="SUPFAM" id="SSF103473">
    <property type="entry name" value="MFS general substrate transporter"/>
    <property type="match status" value="1"/>
</dbReference>
<dbReference type="PROSITE" id="PS50850">
    <property type="entry name" value="MFS"/>
    <property type="match status" value="1"/>
</dbReference>
<evidence type="ECO:0000255" key="1"/>
<evidence type="ECO:0000256" key="2">
    <source>
        <dbReference type="SAM" id="MobiDB-lite"/>
    </source>
</evidence>
<evidence type="ECO:0000305" key="3"/>
<sequence>MTLKKRSSAPELPTSLDEDEEEDSPQPLSNTPFFSMKNLIVATPIILTPLLYGYNLGFVGPYSTMYGYASNCQLYSAKKSCETLTAAKCRWFNASTYVSNTTYGEVCGWADRTTCFLKYSDEAGCLSDSACKWSYSANTCGNQVGYSSIQSGVFAGSLVIGSTMGALMGGYLTKRLDYCKSFLFIGLLSVIGNVLTHVATGLFHYWVLFVARIVLGFPLGWQSITSSHYTDKFAPANHAKTLGTLFQVSVSTGIFVTSFFGLVLGNTIQYDAASNANTMGRMQGLVSVSTLLSIFVVFLPLITKDGYSKSRRGDYEGENSEDASRKAAEEYTMTQMIGPILNGVAMGCVTQLTGINANMNFAPTIMSNLGLQPLVGNIIVMAWNMLATFCVIPLSRRFSMRTLFLFCGFVGSLCCVFLGGIPVYPGVTKSDKAISGIAITGIAIFIALYEMGVGPCFYVLAVDVFPESFRPIGSSITVGVMFIFNLIINICYPIATEGISGGPSGNPNKGQAVAFIFFGCIGVVACVIEYFFLQPWVEPEAKMTDDLDGAAVPEGKHD</sequence>